<accession>B1JF83</accession>
<evidence type="ECO:0000255" key="1">
    <source>
        <dbReference type="HAMAP-Rule" id="MF_02002"/>
    </source>
</evidence>
<proteinExistence type="inferred from homology"/>
<comment type="function">
    <text evidence="1">Catalyzes the attachment of isoleucine to tRNA(Ile). As IleRS can inadvertently accommodate and process structurally similar amino acids such as valine, to avoid such errors it has two additional distinct tRNA(Ile)-dependent editing activities. One activity is designated as 'pretransfer' editing and involves the hydrolysis of activated Val-AMP. The other activity is designated 'posttransfer' editing and involves deacylation of mischarged Val-tRNA(Ile).</text>
</comment>
<comment type="catalytic activity">
    <reaction evidence="1">
        <text>tRNA(Ile) + L-isoleucine + ATP = L-isoleucyl-tRNA(Ile) + AMP + diphosphate</text>
        <dbReference type="Rhea" id="RHEA:11060"/>
        <dbReference type="Rhea" id="RHEA-COMP:9666"/>
        <dbReference type="Rhea" id="RHEA-COMP:9695"/>
        <dbReference type="ChEBI" id="CHEBI:30616"/>
        <dbReference type="ChEBI" id="CHEBI:33019"/>
        <dbReference type="ChEBI" id="CHEBI:58045"/>
        <dbReference type="ChEBI" id="CHEBI:78442"/>
        <dbReference type="ChEBI" id="CHEBI:78528"/>
        <dbReference type="ChEBI" id="CHEBI:456215"/>
        <dbReference type="EC" id="6.1.1.5"/>
    </reaction>
</comment>
<comment type="cofactor">
    <cofactor evidence="1">
        <name>Zn(2+)</name>
        <dbReference type="ChEBI" id="CHEBI:29105"/>
    </cofactor>
    <text evidence="1">Binds 1 zinc ion per subunit.</text>
</comment>
<comment type="subunit">
    <text evidence="1">Monomer.</text>
</comment>
<comment type="subcellular location">
    <subcellularLocation>
        <location evidence="1">Cytoplasm</location>
    </subcellularLocation>
</comment>
<comment type="domain">
    <text evidence="1">IleRS has two distinct active sites: one for aminoacylation and one for editing. The misactivated valine is translocated from the active site to the editing site, which sterically excludes the correctly activated isoleucine. The single editing site contains two valyl binding pockets, one specific for each substrate (Val-AMP or Val-tRNA(Ile)).</text>
</comment>
<comment type="similarity">
    <text evidence="1">Belongs to the class-I aminoacyl-tRNA synthetase family. IleS type 1 subfamily.</text>
</comment>
<protein>
    <recommendedName>
        <fullName evidence="1">Isoleucine--tRNA ligase</fullName>
        <ecNumber evidence="1">6.1.1.5</ecNumber>
    </recommendedName>
    <alternativeName>
        <fullName evidence="1">Isoleucyl-tRNA synthetase</fullName>
        <shortName evidence="1">IleRS</shortName>
    </alternativeName>
</protein>
<dbReference type="EC" id="6.1.1.5" evidence="1"/>
<dbReference type="EMBL" id="CP000949">
    <property type="protein sequence ID" value="ACA75039.1"/>
    <property type="molecule type" value="Genomic_DNA"/>
</dbReference>
<dbReference type="SMR" id="B1JF83"/>
<dbReference type="STRING" id="390235.PputW619_4559"/>
<dbReference type="KEGG" id="ppw:PputW619_4559"/>
<dbReference type="eggNOG" id="COG0060">
    <property type="taxonomic scope" value="Bacteria"/>
</dbReference>
<dbReference type="HOGENOM" id="CLU_001493_7_1_6"/>
<dbReference type="OrthoDB" id="9810365at2"/>
<dbReference type="GO" id="GO:0005829">
    <property type="term" value="C:cytosol"/>
    <property type="evidence" value="ECO:0007669"/>
    <property type="project" value="TreeGrafter"/>
</dbReference>
<dbReference type="GO" id="GO:0002161">
    <property type="term" value="F:aminoacyl-tRNA deacylase activity"/>
    <property type="evidence" value="ECO:0007669"/>
    <property type="project" value="InterPro"/>
</dbReference>
<dbReference type="GO" id="GO:0005524">
    <property type="term" value="F:ATP binding"/>
    <property type="evidence" value="ECO:0007669"/>
    <property type="project" value="UniProtKB-UniRule"/>
</dbReference>
<dbReference type="GO" id="GO:0004822">
    <property type="term" value="F:isoleucine-tRNA ligase activity"/>
    <property type="evidence" value="ECO:0007669"/>
    <property type="project" value="UniProtKB-UniRule"/>
</dbReference>
<dbReference type="GO" id="GO:0000049">
    <property type="term" value="F:tRNA binding"/>
    <property type="evidence" value="ECO:0007669"/>
    <property type="project" value="InterPro"/>
</dbReference>
<dbReference type="GO" id="GO:0008270">
    <property type="term" value="F:zinc ion binding"/>
    <property type="evidence" value="ECO:0007669"/>
    <property type="project" value="UniProtKB-UniRule"/>
</dbReference>
<dbReference type="GO" id="GO:0006428">
    <property type="term" value="P:isoleucyl-tRNA aminoacylation"/>
    <property type="evidence" value="ECO:0007669"/>
    <property type="project" value="UniProtKB-UniRule"/>
</dbReference>
<dbReference type="CDD" id="cd07960">
    <property type="entry name" value="Anticodon_Ia_Ile_BEm"/>
    <property type="match status" value="1"/>
</dbReference>
<dbReference type="CDD" id="cd00818">
    <property type="entry name" value="IleRS_core"/>
    <property type="match status" value="1"/>
</dbReference>
<dbReference type="FunFam" id="1.10.730.20:FF:000001">
    <property type="entry name" value="Isoleucine--tRNA ligase"/>
    <property type="match status" value="1"/>
</dbReference>
<dbReference type="FunFam" id="3.40.50.620:FF:000042">
    <property type="entry name" value="Isoleucine--tRNA ligase"/>
    <property type="match status" value="1"/>
</dbReference>
<dbReference type="FunFam" id="3.40.50.620:FF:000048">
    <property type="entry name" value="Isoleucine--tRNA ligase"/>
    <property type="match status" value="1"/>
</dbReference>
<dbReference type="Gene3D" id="1.10.730.20">
    <property type="match status" value="1"/>
</dbReference>
<dbReference type="Gene3D" id="3.40.50.620">
    <property type="entry name" value="HUPs"/>
    <property type="match status" value="2"/>
</dbReference>
<dbReference type="Gene3D" id="3.90.740.10">
    <property type="entry name" value="Valyl/Leucyl/Isoleucyl-tRNA synthetase, editing domain"/>
    <property type="match status" value="1"/>
</dbReference>
<dbReference type="HAMAP" id="MF_02002">
    <property type="entry name" value="Ile_tRNA_synth_type1"/>
    <property type="match status" value="1"/>
</dbReference>
<dbReference type="InterPro" id="IPR001412">
    <property type="entry name" value="aa-tRNA-synth_I_CS"/>
</dbReference>
<dbReference type="InterPro" id="IPR002300">
    <property type="entry name" value="aa-tRNA-synth_Ia"/>
</dbReference>
<dbReference type="InterPro" id="IPR033708">
    <property type="entry name" value="Anticodon_Ile_BEm"/>
</dbReference>
<dbReference type="InterPro" id="IPR002301">
    <property type="entry name" value="Ile-tRNA-ligase"/>
</dbReference>
<dbReference type="InterPro" id="IPR023585">
    <property type="entry name" value="Ile-tRNA-ligase_type1"/>
</dbReference>
<dbReference type="InterPro" id="IPR050081">
    <property type="entry name" value="Ile-tRNA_ligase"/>
</dbReference>
<dbReference type="InterPro" id="IPR013155">
    <property type="entry name" value="M/V/L/I-tRNA-synth_anticd-bd"/>
</dbReference>
<dbReference type="InterPro" id="IPR014729">
    <property type="entry name" value="Rossmann-like_a/b/a_fold"/>
</dbReference>
<dbReference type="InterPro" id="IPR009080">
    <property type="entry name" value="tRNAsynth_Ia_anticodon-bd"/>
</dbReference>
<dbReference type="InterPro" id="IPR009008">
    <property type="entry name" value="Val/Leu/Ile-tRNA-synth_edit"/>
</dbReference>
<dbReference type="InterPro" id="IPR010663">
    <property type="entry name" value="Znf_FPG/IleRS"/>
</dbReference>
<dbReference type="NCBIfam" id="TIGR00392">
    <property type="entry name" value="ileS"/>
    <property type="match status" value="1"/>
</dbReference>
<dbReference type="PANTHER" id="PTHR42765:SF1">
    <property type="entry name" value="ISOLEUCINE--TRNA LIGASE, MITOCHONDRIAL"/>
    <property type="match status" value="1"/>
</dbReference>
<dbReference type="PANTHER" id="PTHR42765">
    <property type="entry name" value="SOLEUCYL-TRNA SYNTHETASE"/>
    <property type="match status" value="1"/>
</dbReference>
<dbReference type="Pfam" id="PF08264">
    <property type="entry name" value="Anticodon_1"/>
    <property type="match status" value="1"/>
</dbReference>
<dbReference type="Pfam" id="PF00133">
    <property type="entry name" value="tRNA-synt_1"/>
    <property type="match status" value="1"/>
</dbReference>
<dbReference type="Pfam" id="PF06827">
    <property type="entry name" value="zf-FPG_IleRS"/>
    <property type="match status" value="1"/>
</dbReference>
<dbReference type="PRINTS" id="PR00984">
    <property type="entry name" value="TRNASYNTHILE"/>
</dbReference>
<dbReference type="SUPFAM" id="SSF47323">
    <property type="entry name" value="Anticodon-binding domain of a subclass of class I aminoacyl-tRNA synthetases"/>
    <property type="match status" value="1"/>
</dbReference>
<dbReference type="SUPFAM" id="SSF52374">
    <property type="entry name" value="Nucleotidylyl transferase"/>
    <property type="match status" value="1"/>
</dbReference>
<dbReference type="SUPFAM" id="SSF50677">
    <property type="entry name" value="ValRS/IleRS/LeuRS editing domain"/>
    <property type="match status" value="1"/>
</dbReference>
<dbReference type="PROSITE" id="PS00178">
    <property type="entry name" value="AA_TRNA_LIGASE_I"/>
    <property type="match status" value="1"/>
</dbReference>
<keyword id="KW-0030">Aminoacyl-tRNA synthetase</keyword>
<keyword id="KW-0067">ATP-binding</keyword>
<keyword id="KW-0963">Cytoplasm</keyword>
<keyword id="KW-0436">Ligase</keyword>
<keyword id="KW-0479">Metal-binding</keyword>
<keyword id="KW-0547">Nucleotide-binding</keyword>
<keyword id="KW-0648">Protein biosynthesis</keyword>
<keyword id="KW-0862">Zinc</keyword>
<sequence>MTDYKATLNLPDTAFPMKAGLPQREPQILQRWDSIGLYQKLREIGKDRPKFVLHDGPPYANGKIHIGHALNKILKDMIVRSKTLSGFDAPYVPGWDCHGLPIEHKVEVTHGKHLTADRTRELCREYAAEQIEGQKTEFIRLGVLGDWDNPYKTMNFANEAGEIRALAEMVKQGFVFKGLKPVNWCFDCGSALAEAEVEYADKKSQTIDVAFPVADADKLAAAFGLPALAKPAAIVIWTTTPWTIPANQALNIHPEFKYALVDTGERLLVLAEELVESCLKRYNLEGSVIATAQGSALELVNFRHPFYDRLSPVYLADYVELGAGTGVVHSAPAYGEDDFVTCKRYGMVNDDILTPVQSNGVYVESLEFFGGQFIWKANPAIVEKLSEVGALMHTETISHSYMHCWRHKTPLIYRATAQWFVGMDKQPSTGEPLRERALKAIEDTQFVPAWGQARLHSMIANRPDWCISRQRNWGVPIPFFLHKQTGELHPRTVELMEAVAKRVEQEGIEAWFKLDAAELLGDEAGQYDKITDTLDVWFDSGTTHWHVLRGSHDIGHATGPRADLYLEGSDQHRGWFHSSLLTGCAIDNHAPYRELLTHGFTVDESGRKMSKSLGNTIEPEKVNNTLGADILRLWVSATDYSGEMAVSEQILQRSADAYRRIRNTARFLLSNLSGFDPARDLLAPEDMLALDRWAVDRTLLLQRELEEHYSEYRFWNVYSKIHNFCVQELGGFYLDIIKDRQYTTGANSVARRSCQTALYHISEALVRWIAPILAFTADEIWQYLPGERNESVMLNGWYQGLSELPEGTELDRAYWDRVMAVKAAVNKELENQRTAKVIGGNLQAEVTLFAEEGLSADLSKLGDELRFVLITSAASVVPFAQAPADAVATEVEGLKLKVVKSGHAKCGRCWHFRADVGSHPEHPEICSRCVDNLSGSGEVRHYA</sequence>
<feature type="chain" id="PRO_1000189189" description="Isoleucine--tRNA ligase">
    <location>
        <begin position="1"/>
        <end position="943"/>
    </location>
</feature>
<feature type="short sequence motif" description="'HIGH' region">
    <location>
        <begin position="58"/>
        <end position="68"/>
    </location>
</feature>
<feature type="short sequence motif" description="'KMSKS' region">
    <location>
        <begin position="608"/>
        <end position="612"/>
    </location>
</feature>
<feature type="binding site" evidence="1">
    <location>
        <position position="567"/>
    </location>
    <ligand>
        <name>L-isoleucyl-5'-AMP</name>
        <dbReference type="ChEBI" id="CHEBI:178002"/>
    </ligand>
</feature>
<feature type="binding site" evidence="1">
    <location>
        <position position="611"/>
    </location>
    <ligand>
        <name>ATP</name>
        <dbReference type="ChEBI" id="CHEBI:30616"/>
    </ligand>
</feature>
<feature type="binding site" evidence="1">
    <location>
        <position position="906"/>
    </location>
    <ligand>
        <name>Zn(2+)</name>
        <dbReference type="ChEBI" id="CHEBI:29105"/>
    </ligand>
</feature>
<feature type="binding site" evidence="1">
    <location>
        <position position="909"/>
    </location>
    <ligand>
        <name>Zn(2+)</name>
        <dbReference type="ChEBI" id="CHEBI:29105"/>
    </ligand>
</feature>
<feature type="binding site" evidence="1">
    <location>
        <position position="926"/>
    </location>
    <ligand>
        <name>Zn(2+)</name>
        <dbReference type="ChEBI" id="CHEBI:29105"/>
    </ligand>
</feature>
<feature type="binding site" evidence="1">
    <location>
        <position position="929"/>
    </location>
    <ligand>
        <name>Zn(2+)</name>
        <dbReference type="ChEBI" id="CHEBI:29105"/>
    </ligand>
</feature>
<organism>
    <name type="scientific">Pseudomonas putida (strain W619)</name>
    <dbReference type="NCBI Taxonomy" id="390235"/>
    <lineage>
        <taxon>Bacteria</taxon>
        <taxon>Pseudomonadati</taxon>
        <taxon>Pseudomonadota</taxon>
        <taxon>Gammaproteobacteria</taxon>
        <taxon>Pseudomonadales</taxon>
        <taxon>Pseudomonadaceae</taxon>
        <taxon>Pseudomonas</taxon>
    </lineage>
</organism>
<reference key="1">
    <citation type="submission" date="2008-02" db="EMBL/GenBank/DDBJ databases">
        <title>Complete sequence of Pseudomonas putida W619.</title>
        <authorList>
            <person name="Copeland A."/>
            <person name="Lucas S."/>
            <person name="Lapidus A."/>
            <person name="Barry K."/>
            <person name="Detter J.C."/>
            <person name="Glavina del Rio T."/>
            <person name="Dalin E."/>
            <person name="Tice H."/>
            <person name="Pitluck S."/>
            <person name="Chain P."/>
            <person name="Malfatti S."/>
            <person name="Shin M."/>
            <person name="Vergez L."/>
            <person name="Schmutz J."/>
            <person name="Larimer F."/>
            <person name="Land M."/>
            <person name="Hauser L."/>
            <person name="Kyrpides N."/>
            <person name="Kim E."/>
            <person name="Taghavi S."/>
            <person name="Vangronsveld D."/>
            <person name="van der Lelie D."/>
            <person name="Richardson P."/>
        </authorList>
    </citation>
    <scope>NUCLEOTIDE SEQUENCE [LARGE SCALE GENOMIC DNA]</scope>
    <source>
        <strain>W619</strain>
    </source>
</reference>
<name>SYI_PSEPW</name>
<gene>
    <name evidence="1" type="primary">ileS</name>
    <name type="ordered locus">PputW619_4559</name>
</gene>